<sequence length="322" mass="33034">MAVPASDGSTASEWVTTGSVTVRVPGKVNLYLSVGDLRDDGYHDLTTVFHAVSLLDEVTVRNADVLSLRMIGEGAESLPADERNLAWRAAELMAEHVGRAPDVEITIEKSIPVAGGMAGGSADAAGVLVAMNTLWELGVPRRDLHALAAQLGSDVPFALHGGTALGSGRGEDLATVLARNTFHWVLAFAHRGLSTPKVFGELDRLRADTTRGLPRTDEPEPVLAALASGDPAELAALLGNDLQPAALSLYPDLRRTLRAGVEAGALAGIVSGSGPTCAFLCASAPAALDVGTQLSGAGVCRTVRVASGPVHGAHVVPAPSAS</sequence>
<comment type="function">
    <text evidence="1">Catalyzes the phosphorylation of the position 2 hydroxy group of 4-diphosphocytidyl-2C-methyl-D-erythritol.</text>
</comment>
<comment type="catalytic activity">
    <reaction evidence="1">
        <text>4-CDP-2-C-methyl-D-erythritol + ATP = 4-CDP-2-C-methyl-D-erythritol 2-phosphate + ADP + H(+)</text>
        <dbReference type="Rhea" id="RHEA:18437"/>
        <dbReference type="ChEBI" id="CHEBI:15378"/>
        <dbReference type="ChEBI" id="CHEBI:30616"/>
        <dbReference type="ChEBI" id="CHEBI:57823"/>
        <dbReference type="ChEBI" id="CHEBI:57919"/>
        <dbReference type="ChEBI" id="CHEBI:456216"/>
        <dbReference type="EC" id="2.7.1.148"/>
    </reaction>
</comment>
<comment type="pathway">
    <text evidence="1">Isoprenoid biosynthesis; isopentenyl diphosphate biosynthesis via DXP pathway; isopentenyl diphosphate from 1-deoxy-D-xylulose 5-phosphate: step 3/6.</text>
</comment>
<comment type="similarity">
    <text evidence="1">Belongs to the GHMP kinase family. IspE subfamily.</text>
</comment>
<comment type="sequence caution" evidence="2">
    <conflict type="erroneous initiation">
        <sequence resource="EMBL-CDS" id="AFP41728"/>
    </conflict>
    <text>Truncated N-terminus.</text>
</comment>
<organism>
    <name type="scientific">Mycolicibacterium smegmatis (strain ATCC 700084 / mc(2)155)</name>
    <name type="common">Mycobacterium smegmatis</name>
    <dbReference type="NCBI Taxonomy" id="246196"/>
    <lineage>
        <taxon>Bacteria</taxon>
        <taxon>Bacillati</taxon>
        <taxon>Actinomycetota</taxon>
        <taxon>Actinomycetes</taxon>
        <taxon>Mycobacteriales</taxon>
        <taxon>Mycobacteriaceae</taxon>
        <taxon>Mycolicibacterium</taxon>
    </lineage>
</organism>
<proteinExistence type="inferred from homology"/>
<gene>
    <name evidence="1" type="primary">ispE</name>
    <name type="ordered locus">MSMEG_5436</name>
    <name type="ordered locus">MSMEI_5286</name>
</gene>
<dbReference type="EC" id="2.7.1.148" evidence="1"/>
<dbReference type="EMBL" id="CP000480">
    <property type="protein sequence ID" value="ABK71884.1"/>
    <property type="molecule type" value="Genomic_DNA"/>
</dbReference>
<dbReference type="EMBL" id="CP001663">
    <property type="protein sequence ID" value="AFP41728.1"/>
    <property type="status" value="ALT_INIT"/>
    <property type="molecule type" value="Genomic_DNA"/>
</dbReference>
<dbReference type="RefSeq" id="YP_889675.1">
    <property type="nucleotide sequence ID" value="NC_008596.1"/>
</dbReference>
<dbReference type="SMR" id="A0R3D7"/>
<dbReference type="STRING" id="246196.MSMEG_5436"/>
<dbReference type="PaxDb" id="246196-MSMEI_5286"/>
<dbReference type="KEGG" id="msg:MSMEI_5286"/>
<dbReference type="KEGG" id="msm:MSMEG_5436"/>
<dbReference type="PATRIC" id="fig|246196.19.peg.5297"/>
<dbReference type="eggNOG" id="COG1947">
    <property type="taxonomic scope" value="Bacteria"/>
</dbReference>
<dbReference type="OrthoDB" id="3173073at2"/>
<dbReference type="UniPathway" id="UPA00056">
    <property type="reaction ID" value="UER00094"/>
</dbReference>
<dbReference type="Proteomes" id="UP000000757">
    <property type="component" value="Chromosome"/>
</dbReference>
<dbReference type="Proteomes" id="UP000006158">
    <property type="component" value="Chromosome"/>
</dbReference>
<dbReference type="GO" id="GO:0050515">
    <property type="term" value="F:4-(cytidine 5'-diphospho)-2-C-methyl-D-erythritol kinase activity"/>
    <property type="evidence" value="ECO:0007669"/>
    <property type="project" value="UniProtKB-UniRule"/>
</dbReference>
<dbReference type="GO" id="GO:0005524">
    <property type="term" value="F:ATP binding"/>
    <property type="evidence" value="ECO:0007669"/>
    <property type="project" value="UniProtKB-UniRule"/>
</dbReference>
<dbReference type="GO" id="GO:0019288">
    <property type="term" value="P:isopentenyl diphosphate biosynthetic process, methylerythritol 4-phosphate pathway"/>
    <property type="evidence" value="ECO:0007669"/>
    <property type="project" value="UniProtKB-UniRule"/>
</dbReference>
<dbReference type="GO" id="GO:0016114">
    <property type="term" value="P:terpenoid biosynthetic process"/>
    <property type="evidence" value="ECO:0007669"/>
    <property type="project" value="InterPro"/>
</dbReference>
<dbReference type="Gene3D" id="3.30.230.10">
    <property type="match status" value="1"/>
</dbReference>
<dbReference type="Gene3D" id="3.30.70.890">
    <property type="entry name" value="GHMP kinase, C-terminal domain"/>
    <property type="match status" value="1"/>
</dbReference>
<dbReference type="HAMAP" id="MF_00061">
    <property type="entry name" value="IspE"/>
    <property type="match status" value="1"/>
</dbReference>
<dbReference type="InterPro" id="IPR013750">
    <property type="entry name" value="GHMP_kinase_C_dom"/>
</dbReference>
<dbReference type="InterPro" id="IPR036554">
    <property type="entry name" value="GHMP_kinase_C_sf"/>
</dbReference>
<dbReference type="InterPro" id="IPR006204">
    <property type="entry name" value="GHMP_kinase_N_dom"/>
</dbReference>
<dbReference type="InterPro" id="IPR004424">
    <property type="entry name" value="IspE"/>
</dbReference>
<dbReference type="InterPro" id="IPR020568">
    <property type="entry name" value="Ribosomal_Su5_D2-typ_SF"/>
</dbReference>
<dbReference type="InterPro" id="IPR014721">
    <property type="entry name" value="Ribsml_uS5_D2-typ_fold_subgr"/>
</dbReference>
<dbReference type="NCBIfam" id="TIGR00154">
    <property type="entry name" value="ispE"/>
    <property type="match status" value="1"/>
</dbReference>
<dbReference type="NCBIfam" id="NF002870">
    <property type="entry name" value="PRK03188.1"/>
    <property type="match status" value="1"/>
</dbReference>
<dbReference type="PANTHER" id="PTHR43527">
    <property type="entry name" value="4-DIPHOSPHOCYTIDYL-2-C-METHYL-D-ERYTHRITOL KINASE, CHLOROPLASTIC"/>
    <property type="match status" value="1"/>
</dbReference>
<dbReference type="PANTHER" id="PTHR43527:SF2">
    <property type="entry name" value="4-DIPHOSPHOCYTIDYL-2-C-METHYL-D-ERYTHRITOL KINASE, CHLOROPLASTIC"/>
    <property type="match status" value="1"/>
</dbReference>
<dbReference type="Pfam" id="PF08544">
    <property type="entry name" value="GHMP_kinases_C"/>
    <property type="match status" value="1"/>
</dbReference>
<dbReference type="Pfam" id="PF00288">
    <property type="entry name" value="GHMP_kinases_N"/>
    <property type="match status" value="1"/>
</dbReference>
<dbReference type="PIRSF" id="PIRSF010376">
    <property type="entry name" value="IspE"/>
    <property type="match status" value="1"/>
</dbReference>
<dbReference type="SUPFAM" id="SSF55060">
    <property type="entry name" value="GHMP Kinase, C-terminal domain"/>
    <property type="match status" value="1"/>
</dbReference>
<dbReference type="SUPFAM" id="SSF54211">
    <property type="entry name" value="Ribosomal protein S5 domain 2-like"/>
    <property type="match status" value="1"/>
</dbReference>
<protein>
    <recommendedName>
        <fullName evidence="1">4-diphosphocytidyl-2-C-methyl-D-erythritol kinase</fullName>
        <shortName evidence="1">CMK</shortName>
        <ecNumber evidence="1">2.7.1.148</ecNumber>
    </recommendedName>
    <alternativeName>
        <fullName evidence="1">4-(cytidine-5'-diphospho)-2-C-methyl-D-erythritol kinase</fullName>
    </alternativeName>
</protein>
<accession>A0R3D7</accession>
<accession>I7FSA4</accession>
<feature type="chain" id="PRO_0000335730" description="4-diphosphocytidyl-2-C-methyl-D-erythritol kinase">
    <location>
        <begin position="1"/>
        <end position="322"/>
    </location>
</feature>
<feature type="active site" evidence="1">
    <location>
        <position position="27"/>
    </location>
</feature>
<feature type="active site" evidence="1">
    <location>
        <position position="154"/>
    </location>
</feature>
<feature type="binding site" evidence="1">
    <location>
        <begin position="112"/>
        <end position="122"/>
    </location>
    <ligand>
        <name>ATP</name>
        <dbReference type="ChEBI" id="CHEBI:30616"/>
    </ligand>
</feature>
<keyword id="KW-0067">ATP-binding</keyword>
<keyword id="KW-0414">Isoprene biosynthesis</keyword>
<keyword id="KW-0418">Kinase</keyword>
<keyword id="KW-0547">Nucleotide-binding</keyword>
<keyword id="KW-1185">Reference proteome</keyword>
<keyword id="KW-0808">Transferase</keyword>
<name>ISPE_MYCS2</name>
<reference key="1">
    <citation type="submission" date="2006-10" db="EMBL/GenBank/DDBJ databases">
        <authorList>
            <person name="Fleischmann R.D."/>
            <person name="Dodson R.J."/>
            <person name="Haft D.H."/>
            <person name="Merkel J.S."/>
            <person name="Nelson W.C."/>
            <person name="Fraser C.M."/>
        </authorList>
    </citation>
    <scope>NUCLEOTIDE SEQUENCE [LARGE SCALE GENOMIC DNA]</scope>
    <source>
        <strain>ATCC 700084 / mc(2)155</strain>
    </source>
</reference>
<reference key="2">
    <citation type="journal article" date="2007" name="Genome Biol.">
        <title>Interrupted coding sequences in Mycobacterium smegmatis: authentic mutations or sequencing errors?</title>
        <authorList>
            <person name="Deshayes C."/>
            <person name="Perrodou E."/>
            <person name="Gallien S."/>
            <person name="Euphrasie D."/>
            <person name="Schaeffer C."/>
            <person name="Van-Dorsselaer A."/>
            <person name="Poch O."/>
            <person name="Lecompte O."/>
            <person name="Reyrat J.-M."/>
        </authorList>
    </citation>
    <scope>NUCLEOTIDE SEQUENCE [LARGE SCALE GENOMIC DNA]</scope>
    <source>
        <strain>ATCC 700084 / mc(2)155</strain>
    </source>
</reference>
<reference key="3">
    <citation type="journal article" date="2009" name="Genome Res.">
        <title>Ortho-proteogenomics: multiple proteomes investigation through orthology and a new MS-based protocol.</title>
        <authorList>
            <person name="Gallien S."/>
            <person name="Perrodou E."/>
            <person name="Carapito C."/>
            <person name="Deshayes C."/>
            <person name="Reyrat J.-M."/>
            <person name="Van Dorsselaer A."/>
            <person name="Poch O."/>
            <person name="Schaeffer C."/>
            <person name="Lecompte O."/>
        </authorList>
    </citation>
    <scope>NUCLEOTIDE SEQUENCE [LARGE SCALE GENOMIC DNA]</scope>
    <source>
        <strain>ATCC 700084 / mc(2)155</strain>
    </source>
</reference>
<evidence type="ECO:0000255" key="1">
    <source>
        <dbReference type="HAMAP-Rule" id="MF_00061"/>
    </source>
</evidence>
<evidence type="ECO:0000305" key="2"/>